<reference key="1">
    <citation type="journal article" date="1997" name="J. Cell Sci.">
        <title>Distinct subunit functions and cell cycle regulated phosphorylation of 20S APC/cyclosome required for anaphase in fission yeast.</title>
        <authorList>
            <person name="Yamada H."/>
            <person name="Kumada K."/>
            <person name="Yanagida M."/>
        </authorList>
    </citation>
    <scope>NUCLEOTIDE SEQUENCE [GENOMIC DNA]</scope>
    <scope>FUNCTION</scope>
</reference>
<reference key="2">
    <citation type="journal article" date="2002" name="Nature">
        <title>The genome sequence of Schizosaccharomyces pombe.</title>
        <authorList>
            <person name="Wood V."/>
            <person name="Gwilliam R."/>
            <person name="Rajandream M.A."/>
            <person name="Lyne M.H."/>
            <person name="Lyne R."/>
            <person name="Stewart A."/>
            <person name="Sgouros J.G."/>
            <person name="Peat N."/>
            <person name="Hayles J."/>
            <person name="Baker S.G."/>
            <person name="Basham D."/>
            <person name="Bowman S."/>
            <person name="Brooks K."/>
            <person name="Brown D."/>
            <person name="Brown S."/>
            <person name="Chillingworth T."/>
            <person name="Churcher C.M."/>
            <person name="Collins M."/>
            <person name="Connor R."/>
            <person name="Cronin A."/>
            <person name="Davis P."/>
            <person name="Feltwell T."/>
            <person name="Fraser A."/>
            <person name="Gentles S."/>
            <person name="Goble A."/>
            <person name="Hamlin N."/>
            <person name="Harris D.E."/>
            <person name="Hidalgo J."/>
            <person name="Hodgson G."/>
            <person name="Holroyd S."/>
            <person name="Hornsby T."/>
            <person name="Howarth S."/>
            <person name="Huckle E.J."/>
            <person name="Hunt S."/>
            <person name="Jagels K."/>
            <person name="James K.D."/>
            <person name="Jones L."/>
            <person name="Jones M."/>
            <person name="Leather S."/>
            <person name="McDonald S."/>
            <person name="McLean J."/>
            <person name="Mooney P."/>
            <person name="Moule S."/>
            <person name="Mungall K.L."/>
            <person name="Murphy L.D."/>
            <person name="Niblett D."/>
            <person name="Odell C."/>
            <person name="Oliver K."/>
            <person name="O'Neil S."/>
            <person name="Pearson D."/>
            <person name="Quail M.A."/>
            <person name="Rabbinowitsch E."/>
            <person name="Rutherford K.M."/>
            <person name="Rutter S."/>
            <person name="Saunders D."/>
            <person name="Seeger K."/>
            <person name="Sharp S."/>
            <person name="Skelton J."/>
            <person name="Simmonds M.N."/>
            <person name="Squares R."/>
            <person name="Squares S."/>
            <person name="Stevens K."/>
            <person name="Taylor K."/>
            <person name="Taylor R.G."/>
            <person name="Tivey A."/>
            <person name="Walsh S.V."/>
            <person name="Warren T."/>
            <person name="Whitehead S."/>
            <person name="Woodward J.R."/>
            <person name="Volckaert G."/>
            <person name="Aert R."/>
            <person name="Robben J."/>
            <person name="Grymonprez B."/>
            <person name="Weltjens I."/>
            <person name="Vanstreels E."/>
            <person name="Rieger M."/>
            <person name="Schaefer M."/>
            <person name="Mueller-Auer S."/>
            <person name="Gabel C."/>
            <person name="Fuchs M."/>
            <person name="Duesterhoeft A."/>
            <person name="Fritzc C."/>
            <person name="Holzer E."/>
            <person name="Moestl D."/>
            <person name="Hilbert H."/>
            <person name="Borzym K."/>
            <person name="Langer I."/>
            <person name="Beck A."/>
            <person name="Lehrach H."/>
            <person name="Reinhardt R."/>
            <person name="Pohl T.M."/>
            <person name="Eger P."/>
            <person name="Zimmermann W."/>
            <person name="Wedler H."/>
            <person name="Wambutt R."/>
            <person name="Purnelle B."/>
            <person name="Goffeau A."/>
            <person name="Cadieu E."/>
            <person name="Dreano S."/>
            <person name="Gloux S."/>
            <person name="Lelaure V."/>
            <person name="Mottier S."/>
            <person name="Galibert F."/>
            <person name="Aves S.J."/>
            <person name="Xiang Z."/>
            <person name="Hunt C."/>
            <person name="Moore K."/>
            <person name="Hurst S.M."/>
            <person name="Lucas M."/>
            <person name="Rochet M."/>
            <person name="Gaillardin C."/>
            <person name="Tallada V.A."/>
            <person name="Garzon A."/>
            <person name="Thode G."/>
            <person name="Daga R.R."/>
            <person name="Cruzado L."/>
            <person name="Jimenez J."/>
            <person name="Sanchez M."/>
            <person name="del Rey F."/>
            <person name="Benito J."/>
            <person name="Dominguez A."/>
            <person name="Revuelta J.L."/>
            <person name="Moreno S."/>
            <person name="Armstrong J."/>
            <person name="Forsburg S.L."/>
            <person name="Cerutti L."/>
            <person name="Lowe T."/>
            <person name="McCombie W.R."/>
            <person name="Paulsen I."/>
            <person name="Potashkin J."/>
            <person name="Shpakovski G.V."/>
            <person name="Ussery D."/>
            <person name="Barrell B.G."/>
            <person name="Nurse P."/>
        </authorList>
    </citation>
    <scope>NUCLEOTIDE SEQUENCE [LARGE SCALE GENOMIC DNA]</scope>
    <source>
        <strain>972 / ATCC 24843</strain>
    </source>
</reference>
<reference key="3">
    <citation type="journal article" date="2002" name="Curr. Biol.">
        <title>Proteomics analysis identifies new components of the fission and budding yeast anaphase-promoting complexes.</title>
        <authorList>
            <person name="Yoon H.-J."/>
            <person name="Feoktistova A."/>
            <person name="Wolfe B.A."/>
            <person name="Jennings J.L."/>
            <person name="Link A.J."/>
            <person name="Gould K.L."/>
        </authorList>
    </citation>
    <scope>SUBUNIT</scope>
</reference>
<reference key="4">
    <citation type="journal article" date="2010" name="EMBO J.">
        <title>The APC/C subunit Cdc16/Cut9 is a contiguous tetratricopeptide repeat superhelix with a homo-dimer interface similar to Cdc27.</title>
        <authorList>
            <person name="Zhang Z."/>
            <person name="Kulkarni K."/>
            <person name="Hanrahan S.J."/>
            <person name="Thompson A.J."/>
            <person name="Barford D."/>
        </authorList>
    </citation>
    <scope>X-RAY CRYSTALLOGRAPHY (2.6 ANGSTROMS) IN COMPLEX WITH CUT9</scope>
    <scope>ACETYLATION AT MET-1</scope>
    <scope>SUBUNIT</scope>
</reference>
<evidence type="ECO:0000256" key="1">
    <source>
        <dbReference type="SAM" id="MobiDB-lite"/>
    </source>
</evidence>
<evidence type="ECO:0000269" key="2">
    <source>
    </source>
</evidence>
<evidence type="ECO:0000269" key="3">
    <source>
    </source>
</evidence>
<evidence type="ECO:0000269" key="4">
    <source>
    </source>
</evidence>
<evidence type="ECO:0007829" key="5">
    <source>
        <dbReference type="PDB" id="2XPI"/>
    </source>
</evidence>
<comment type="function">
    <text evidence="4">Component of the anaphase promoting complex/cyclosome (APC/C), a cell cycle-regulated E3 ubiquitin-protein ligase complex that controls progression through mitosis and the G1 phase of the cell cycle. The APC/C is thought to confer substrate specificity and, in the presence of ubiquitin-conjugating E2 enzymes, it catalyzes the formation of protein-ubiquitin conjugates that are subsequently degraded by the 26S proteasome. Has a role in assembling cut9 in the 20S APC/cyclosome.</text>
</comment>
<comment type="subunit">
    <text evidence="2 3">The APC/C is composed of at least 13 subunits: apc1, apc2, nuc2, apc4, apc5, cut9, apc8, apc10, apc11, hcn1, apc13, apc14 and apc15. Interacts directly (via N-terminus) with cut9.</text>
</comment>
<comment type="interaction">
    <interactant intactId="EBI-1251563">
        <id>O13916</id>
    </interactant>
    <interactant intactId="EBI-1160859">
        <id>P41889</id>
        <label>cut9</label>
    </interactant>
    <organismsDiffer>false</organismsDiffer>
    <experiments>2</experiments>
</comment>
<name>HCN1_SCHPO</name>
<sequence>MLRRNPTAIQITAEDVLAYDEEKLRQTLDSESTTEEALQKNEESTRLSPEKKKIIRERRIGITQIFDSSMHPSQGGAAQS</sequence>
<feature type="chain" id="PRO_0000083923" description="Anaphase-promoting complex subunit hcn1">
    <location>
        <begin position="1"/>
        <end position="80"/>
    </location>
</feature>
<feature type="region of interest" description="Disordered" evidence="1">
    <location>
        <begin position="26"/>
        <end position="54"/>
    </location>
</feature>
<feature type="compositionally biased region" description="Basic and acidic residues" evidence="1">
    <location>
        <begin position="37"/>
        <end position="54"/>
    </location>
</feature>
<feature type="modified residue" description="N-acetylmethionine" evidence="3">
    <location>
        <position position="1"/>
    </location>
</feature>
<feature type="helix" evidence="5">
    <location>
        <begin position="13"/>
        <end position="20"/>
    </location>
</feature>
<proteinExistence type="evidence at protein level"/>
<organism>
    <name type="scientific">Schizosaccharomyces pombe (strain 972 / ATCC 24843)</name>
    <name type="common">Fission yeast</name>
    <dbReference type="NCBI Taxonomy" id="284812"/>
    <lineage>
        <taxon>Eukaryota</taxon>
        <taxon>Fungi</taxon>
        <taxon>Dikarya</taxon>
        <taxon>Ascomycota</taxon>
        <taxon>Taphrinomycotina</taxon>
        <taxon>Schizosaccharomycetes</taxon>
        <taxon>Schizosaccharomycetales</taxon>
        <taxon>Schizosaccharomycetaceae</taxon>
        <taxon>Schizosaccharomyces</taxon>
    </lineage>
</organism>
<protein>
    <recommendedName>
        <fullName>Anaphase-promoting complex subunit hcn1</fullName>
    </recommendedName>
    <alternativeName>
        <fullName>20S cyclosome/APC complex protein hcn1</fullName>
    </alternativeName>
    <alternativeName>
        <fullName>Chaperone-like protein hcn1</fullName>
    </alternativeName>
    <alternativeName>
        <fullName>High copy suppressor of cut9 protein 1</fullName>
    </alternativeName>
</protein>
<dbReference type="EMBL" id="AB001373">
    <property type="protein sequence ID" value="BAD34487.1"/>
    <property type="molecule type" value="Genomic_DNA"/>
</dbReference>
<dbReference type="EMBL" id="CU329670">
    <property type="protein sequence ID" value="CAB11170.1"/>
    <property type="molecule type" value="Genomic_DNA"/>
</dbReference>
<dbReference type="PIR" id="T38250">
    <property type="entry name" value="T38250"/>
</dbReference>
<dbReference type="RefSeq" id="NP_593643.1">
    <property type="nucleotide sequence ID" value="NM_001019074.1"/>
</dbReference>
<dbReference type="PDB" id="2XPI">
    <property type="method" value="X-ray"/>
    <property type="resolution" value="2.60 A"/>
    <property type="chains" value="B/E=1-80"/>
</dbReference>
<dbReference type="PDBsum" id="2XPI"/>
<dbReference type="SMR" id="O13916"/>
<dbReference type="BioGRID" id="278526">
    <property type="interactions" value="5"/>
</dbReference>
<dbReference type="ComplexPortal" id="CPX-763">
    <property type="entry name" value="Anaphase-promoting complex"/>
</dbReference>
<dbReference type="ComplexPortal" id="CPX-764">
    <property type="entry name" value="Anaphase-promoting complex, slp1 variant"/>
</dbReference>
<dbReference type="ComplexPortal" id="CPX-765">
    <property type="entry name" value="Anaphase-promoting complex, srw1 variant"/>
</dbReference>
<dbReference type="ComplexPortal" id="CPX-766">
    <property type="entry name" value="Anaphase-promoting complex, mfr1 variant"/>
</dbReference>
<dbReference type="FunCoup" id="O13916">
    <property type="interactions" value="15"/>
</dbReference>
<dbReference type="IntAct" id="O13916">
    <property type="interactions" value="3"/>
</dbReference>
<dbReference type="MINT" id="O13916"/>
<dbReference type="STRING" id="284812.O13916"/>
<dbReference type="iPTMnet" id="O13916"/>
<dbReference type="PaxDb" id="4896-SPAC23C11.12.1"/>
<dbReference type="EnsemblFungi" id="SPAC23C11.12.1">
    <property type="protein sequence ID" value="SPAC23C11.12.1:pep"/>
    <property type="gene ID" value="SPAC23C11.12"/>
</dbReference>
<dbReference type="GeneID" id="2542045"/>
<dbReference type="KEGG" id="spo:2542045"/>
<dbReference type="PomBase" id="SPAC23C11.12">
    <property type="gene designation" value="hcn1"/>
</dbReference>
<dbReference type="VEuPathDB" id="FungiDB:SPAC23C11.12"/>
<dbReference type="HOGENOM" id="CLU_2723626_0_0_1"/>
<dbReference type="InParanoid" id="O13916"/>
<dbReference type="OMA" id="PGEEQYA"/>
<dbReference type="EvolutionaryTrace" id="O13916"/>
<dbReference type="PRO" id="PR:O13916"/>
<dbReference type="Proteomes" id="UP000002485">
    <property type="component" value="Chromosome I"/>
</dbReference>
<dbReference type="GO" id="GO:0005680">
    <property type="term" value="C:anaphase-promoting complex"/>
    <property type="evidence" value="ECO:0000314"/>
    <property type="project" value="PomBase"/>
</dbReference>
<dbReference type="GO" id="GO:0005829">
    <property type="term" value="C:cytosol"/>
    <property type="evidence" value="ECO:0007005"/>
    <property type="project" value="PomBase"/>
</dbReference>
<dbReference type="GO" id="GO:0005634">
    <property type="term" value="C:nucleus"/>
    <property type="evidence" value="ECO:0007005"/>
    <property type="project" value="PomBase"/>
</dbReference>
<dbReference type="GO" id="GO:0031145">
    <property type="term" value="P:anaphase-promoting complex-dependent catabolic process"/>
    <property type="evidence" value="ECO:0007669"/>
    <property type="project" value="InterPro"/>
</dbReference>
<dbReference type="GO" id="GO:0031536">
    <property type="term" value="P:positive regulation of exit from mitosis"/>
    <property type="evidence" value="ECO:0000315"/>
    <property type="project" value="PomBase"/>
</dbReference>
<dbReference type="DisProt" id="DP01246"/>
<dbReference type="InterPro" id="IPR018860">
    <property type="entry name" value="APC_suCDC26"/>
</dbReference>
<dbReference type="Pfam" id="PF10471">
    <property type="entry name" value="ANAPC_CDC26"/>
    <property type="match status" value="1"/>
</dbReference>
<accession>O13916</accession>
<keyword id="KW-0002">3D-structure</keyword>
<keyword id="KW-0007">Acetylation</keyword>
<keyword id="KW-0143">Chaperone</keyword>
<keyword id="KW-1185">Reference proteome</keyword>
<keyword id="KW-0833">Ubl conjugation pathway</keyword>
<gene>
    <name type="primary">hcn1</name>
    <name type="ORF">SPAC23C11.12</name>
</gene>